<gene>
    <name evidence="1" type="primary">glgA</name>
    <name type="ordered locus">FTN_0516</name>
</gene>
<keyword id="KW-0320">Glycogen biosynthesis</keyword>
<keyword id="KW-0328">Glycosyltransferase</keyword>
<keyword id="KW-0808">Transferase</keyword>
<sequence length="489" mass="53534">MRVLHVCSELYPILKTGGLADVTAALPPALASFGVDSRVLVPGFPAFINAIKDKQLLINIPSRFGAEEINIFLAKVPNTKIDIYVIDAPSLFARPGNPYADSSNQAYADNYLRFALLGWIAARISEGLDAKWKPEIVHSHDWHAGLVPAYIKASELASGKKAVKTVFTVHNLAYQGLFPMSVFAELDLPGIFLSMNGLEFYGQVSFMKAGLYFADKITTVSPTYAKEIQTYEQGCGLEGLLADRHNDLYGVLNGVDPQIWNPKKDSLIATNYSSTTVATGKAKCKLALQQMMGLAEKEDALLFGIVTRLTEQKGLNLLVEAIGEITSRGGQVVLLGSGDKALEEVFLAAAKKYPKSIAVQIGYDEEQAHRIIAGSDVIMVPSRFEPCGLTQLYGLTYGTLPLVHKVGGLADTVTDSSLENLADGTATGFVFDEFSVESLTLAIRRAFALYNRKTDWKKVRKTAMQQQVTWDSSAEKIYQIYKNLVRENN</sequence>
<comment type="function">
    <text evidence="1">Synthesizes alpha-1,4-glucan chains using ADP-glucose.</text>
</comment>
<comment type="catalytic activity">
    <reaction evidence="1">
        <text>[(1-&gt;4)-alpha-D-glucosyl](n) + ADP-alpha-D-glucose = [(1-&gt;4)-alpha-D-glucosyl](n+1) + ADP + H(+)</text>
        <dbReference type="Rhea" id="RHEA:18189"/>
        <dbReference type="Rhea" id="RHEA-COMP:9584"/>
        <dbReference type="Rhea" id="RHEA-COMP:9587"/>
        <dbReference type="ChEBI" id="CHEBI:15378"/>
        <dbReference type="ChEBI" id="CHEBI:15444"/>
        <dbReference type="ChEBI" id="CHEBI:57498"/>
        <dbReference type="ChEBI" id="CHEBI:456216"/>
        <dbReference type="EC" id="2.4.1.21"/>
    </reaction>
</comment>
<comment type="pathway">
    <text evidence="1">Glycan biosynthesis; glycogen biosynthesis.</text>
</comment>
<comment type="similarity">
    <text evidence="1">Belongs to the glycosyltransferase 1 family. Bacterial/plant glycogen synthase subfamily.</text>
</comment>
<accession>A0Q596</accession>
<dbReference type="EC" id="2.4.1.21" evidence="1"/>
<dbReference type="EMBL" id="CP000439">
    <property type="protein sequence ID" value="ABK89411.1"/>
    <property type="molecule type" value="Genomic_DNA"/>
</dbReference>
<dbReference type="RefSeq" id="WP_003038526.1">
    <property type="nucleotide sequence ID" value="NC_008601.1"/>
</dbReference>
<dbReference type="SMR" id="A0Q596"/>
<dbReference type="CAZy" id="GT5">
    <property type="family name" value="Glycosyltransferase Family 5"/>
</dbReference>
<dbReference type="KEGG" id="ftn:FTN_0516"/>
<dbReference type="KEGG" id="ftx:AW25_1513"/>
<dbReference type="BioCyc" id="FTUL401614:G1G75-538-MONOMER"/>
<dbReference type="UniPathway" id="UPA00164"/>
<dbReference type="Proteomes" id="UP000000762">
    <property type="component" value="Chromosome"/>
</dbReference>
<dbReference type="GO" id="GO:0005829">
    <property type="term" value="C:cytosol"/>
    <property type="evidence" value="ECO:0007669"/>
    <property type="project" value="TreeGrafter"/>
</dbReference>
<dbReference type="GO" id="GO:0009011">
    <property type="term" value="F:alpha-1,4-glucan glucosyltransferase (ADP-glucose donor) activity"/>
    <property type="evidence" value="ECO:0007669"/>
    <property type="project" value="UniProtKB-UniRule"/>
</dbReference>
<dbReference type="GO" id="GO:0004373">
    <property type="term" value="F:alpha-1,4-glucan glucosyltransferase (UDP-glucose donor) activity"/>
    <property type="evidence" value="ECO:0007669"/>
    <property type="project" value="InterPro"/>
</dbReference>
<dbReference type="GO" id="GO:0005978">
    <property type="term" value="P:glycogen biosynthetic process"/>
    <property type="evidence" value="ECO:0007669"/>
    <property type="project" value="UniProtKB-UniRule"/>
</dbReference>
<dbReference type="CDD" id="cd03791">
    <property type="entry name" value="GT5_Glycogen_synthase_DULL1-like"/>
    <property type="match status" value="1"/>
</dbReference>
<dbReference type="Gene3D" id="3.40.50.2000">
    <property type="entry name" value="Glycogen Phosphorylase B"/>
    <property type="match status" value="2"/>
</dbReference>
<dbReference type="HAMAP" id="MF_00484">
    <property type="entry name" value="Glycogen_synth"/>
    <property type="match status" value="1"/>
</dbReference>
<dbReference type="InterPro" id="IPR001296">
    <property type="entry name" value="Glyco_trans_1"/>
</dbReference>
<dbReference type="InterPro" id="IPR011835">
    <property type="entry name" value="GS/SS"/>
</dbReference>
<dbReference type="InterPro" id="IPR013534">
    <property type="entry name" value="Starch_synth_cat_dom"/>
</dbReference>
<dbReference type="NCBIfam" id="TIGR02095">
    <property type="entry name" value="glgA"/>
    <property type="match status" value="1"/>
</dbReference>
<dbReference type="NCBIfam" id="NF001899">
    <property type="entry name" value="PRK00654.1-2"/>
    <property type="match status" value="1"/>
</dbReference>
<dbReference type="PANTHER" id="PTHR45825:SF11">
    <property type="entry name" value="ALPHA AMYLASE DOMAIN-CONTAINING PROTEIN"/>
    <property type="match status" value="1"/>
</dbReference>
<dbReference type="PANTHER" id="PTHR45825">
    <property type="entry name" value="GRANULE-BOUND STARCH SYNTHASE 1, CHLOROPLASTIC/AMYLOPLASTIC"/>
    <property type="match status" value="1"/>
</dbReference>
<dbReference type="Pfam" id="PF08323">
    <property type="entry name" value="Glyco_transf_5"/>
    <property type="match status" value="1"/>
</dbReference>
<dbReference type="Pfam" id="PF00534">
    <property type="entry name" value="Glycos_transf_1"/>
    <property type="match status" value="1"/>
</dbReference>
<dbReference type="SUPFAM" id="SSF53756">
    <property type="entry name" value="UDP-Glycosyltransferase/glycogen phosphorylase"/>
    <property type="match status" value="1"/>
</dbReference>
<proteinExistence type="inferred from homology"/>
<reference key="1">
    <citation type="journal article" date="2007" name="Genome Biol.">
        <title>Comparison of Francisella tularensis genomes reveals evolutionary events associated with the emergence of human pathogenic strains.</title>
        <authorList>
            <person name="Rohmer L."/>
            <person name="Fong C."/>
            <person name="Abmayr S."/>
            <person name="Wasnick M."/>
            <person name="Larson Freeman T.J."/>
            <person name="Radey M."/>
            <person name="Guina T."/>
            <person name="Svensson K."/>
            <person name="Hayden H.S."/>
            <person name="Jacobs M."/>
            <person name="Gallagher L.A."/>
            <person name="Manoil C."/>
            <person name="Ernst R.K."/>
            <person name="Drees B."/>
            <person name="Buckley D."/>
            <person name="Haugen E."/>
            <person name="Bovee D."/>
            <person name="Zhou Y."/>
            <person name="Chang J."/>
            <person name="Levy R."/>
            <person name="Lim R."/>
            <person name="Gillett W."/>
            <person name="Guenthener D."/>
            <person name="Kang A."/>
            <person name="Shaffer S.A."/>
            <person name="Taylor G."/>
            <person name="Chen J."/>
            <person name="Gallis B."/>
            <person name="D'Argenio D.A."/>
            <person name="Forsman M."/>
            <person name="Olson M.V."/>
            <person name="Goodlett D.R."/>
            <person name="Kaul R."/>
            <person name="Miller S.I."/>
            <person name="Brittnacher M.J."/>
        </authorList>
    </citation>
    <scope>NUCLEOTIDE SEQUENCE [LARGE SCALE GENOMIC DNA]</scope>
    <source>
        <strain>U112</strain>
    </source>
</reference>
<name>GLGA_FRATN</name>
<evidence type="ECO:0000255" key="1">
    <source>
        <dbReference type="HAMAP-Rule" id="MF_00484"/>
    </source>
</evidence>
<feature type="chain" id="PRO_1000014357" description="Glycogen synthase">
    <location>
        <begin position="1"/>
        <end position="489"/>
    </location>
</feature>
<feature type="binding site" evidence="1">
    <location>
        <position position="15"/>
    </location>
    <ligand>
        <name>ADP-alpha-D-glucose</name>
        <dbReference type="ChEBI" id="CHEBI:57498"/>
    </ligand>
</feature>
<protein>
    <recommendedName>
        <fullName evidence="1">Glycogen synthase</fullName>
        <ecNumber evidence="1">2.4.1.21</ecNumber>
    </recommendedName>
    <alternativeName>
        <fullName evidence="1">Starch [bacterial glycogen] synthase</fullName>
    </alternativeName>
</protein>
<organism>
    <name type="scientific">Francisella tularensis subsp. novicida (strain U112)</name>
    <dbReference type="NCBI Taxonomy" id="401614"/>
    <lineage>
        <taxon>Bacteria</taxon>
        <taxon>Pseudomonadati</taxon>
        <taxon>Pseudomonadota</taxon>
        <taxon>Gammaproteobacteria</taxon>
        <taxon>Thiotrichales</taxon>
        <taxon>Francisellaceae</taxon>
        <taxon>Francisella</taxon>
    </lineage>
</organism>